<proteinExistence type="inferred from homology"/>
<dbReference type="EC" id="4.2.1.11" evidence="1"/>
<dbReference type="EMBL" id="AP011115">
    <property type="protein sequence ID" value="BAH54088.1"/>
    <property type="molecule type" value="Genomic_DNA"/>
</dbReference>
<dbReference type="RefSeq" id="WP_015889582.1">
    <property type="nucleotide sequence ID" value="NC_012522.1"/>
</dbReference>
<dbReference type="SMR" id="C1AY93"/>
<dbReference type="STRING" id="632772.ROP_58410"/>
<dbReference type="KEGG" id="rop:ROP_58410"/>
<dbReference type="PATRIC" id="fig|632772.20.peg.6102"/>
<dbReference type="HOGENOM" id="CLU_031223_2_1_11"/>
<dbReference type="OrthoDB" id="9804716at2"/>
<dbReference type="UniPathway" id="UPA00109">
    <property type="reaction ID" value="UER00187"/>
</dbReference>
<dbReference type="Proteomes" id="UP000002212">
    <property type="component" value="Chromosome"/>
</dbReference>
<dbReference type="GO" id="GO:0009986">
    <property type="term" value="C:cell surface"/>
    <property type="evidence" value="ECO:0007669"/>
    <property type="project" value="UniProtKB-SubCell"/>
</dbReference>
<dbReference type="GO" id="GO:0005576">
    <property type="term" value="C:extracellular region"/>
    <property type="evidence" value="ECO:0007669"/>
    <property type="project" value="UniProtKB-SubCell"/>
</dbReference>
<dbReference type="GO" id="GO:0000015">
    <property type="term" value="C:phosphopyruvate hydratase complex"/>
    <property type="evidence" value="ECO:0007669"/>
    <property type="project" value="InterPro"/>
</dbReference>
<dbReference type="GO" id="GO:0000287">
    <property type="term" value="F:magnesium ion binding"/>
    <property type="evidence" value="ECO:0007669"/>
    <property type="project" value="UniProtKB-UniRule"/>
</dbReference>
<dbReference type="GO" id="GO:0004634">
    <property type="term" value="F:phosphopyruvate hydratase activity"/>
    <property type="evidence" value="ECO:0007669"/>
    <property type="project" value="UniProtKB-UniRule"/>
</dbReference>
<dbReference type="GO" id="GO:0006096">
    <property type="term" value="P:glycolytic process"/>
    <property type="evidence" value="ECO:0007669"/>
    <property type="project" value="UniProtKB-UniRule"/>
</dbReference>
<dbReference type="CDD" id="cd03313">
    <property type="entry name" value="enolase"/>
    <property type="match status" value="1"/>
</dbReference>
<dbReference type="FunFam" id="3.20.20.120:FF:000001">
    <property type="entry name" value="Enolase"/>
    <property type="match status" value="1"/>
</dbReference>
<dbReference type="FunFam" id="3.30.390.10:FF:000001">
    <property type="entry name" value="Enolase"/>
    <property type="match status" value="1"/>
</dbReference>
<dbReference type="Gene3D" id="3.20.20.120">
    <property type="entry name" value="Enolase-like C-terminal domain"/>
    <property type="match status" value="1"/>
</dbReference>
<dbReference type="Gene3D" id="3.30.390.10">
    <property type="entry name" value="Enolase-like, N-terminal domain"/>
    <property type="match status" value="1"/>
</dbReference>
<dbReference type="HAMAP" id="MF_00318">
    <property type="entry name" value="Enolase"/>
    <property type="match status" value="1"/>
</dbReference>
<dbReference type="InterPro" id="IPR000941">
    <property type="entry name" value="Enolase"/>
</dbReference>
<dbReference type="InterPro" id="IPR036849">
    <property type="entry name" value="Enolase-like_C_sf"/>
</dbReference>
<dbReference type="InterPro" id="IPR029017">
    <property type="entry name" value="Enolase-like_N"/>
</dbReference>
<dbReference type="InterPro" id="IPR020810">
    <property type="entry name" value="Enolase_C"/>
</dbReference>
<dbReference type="InterPro" id="IPR020809">
    <property type="entry name" value="Enolase_CS"/>
</dbReference>
<dbReference type="InterPro" id="IPR020811">
    <property type="entry name" value="Enolase_N"/>
</dbReference>
<dbReference type="NCBIfam" id="TIGR01060">
    <property type="entry name" value="eno"/>
    <property type="match status" value="1"/>
</dbReference>
<dbReference type="PANTHER" id="PTHR11902">
    <property type="entry name" value="ENOLASE"/>
    <property type="match status" value="1"/>
</dbReference>
<dbReference type="PANTHER" id="PTHR11902:SF1">
    <property type="entry name" value="ENOLASE"/>
    <property type="match status" value="1"/>
</dbReference>
<dbReference type="Pfam" id="PF00113">
    <property type="entry name" value="Enolase_C"/>
    <property type="match status" value="1"/>
</dbReference>
<dbReference type="Pfam" id="PF03952">
    <property type="entry name" value="Enolase_N"/>
    <property type="match status" value="1"/>
</dbReference>
<dbReference type="PIRSF" id="PIRSF001400">
    <property type="entry name" value="Enolase"/>
    <property type="match status" value="1"/>
</dbReference>
<dbReference type="PRINTS" id="PR00148">
    <property type="entry name" value="ENOLASE"/>
</dbReference>
<dbReference type="SFLD" id="SFLDF00002">
    <property type="entry name" value="enolase"/>
    <property type="match status" value="1"/>
</dbReference>
<dbReference type="SFLD" id="SFLDG00178">
    <property type="entry name" value="enolase"/>
    <property type="match status" value="1"/>
</dbReference>
<dbReference type="SMART" id="SM01192">
    <property type="entry name" value="Enolase_C"/>
    <property type="match status" value="1"/>
</dbReference>
<dbReference type="SMART" id="SM01193">
    <property type="entry name" value="Enolase_N"/>
    <property type="match status" value="1"/>
</dbReference>
<dbReference type="SUPFAM" id="SSF51604">
    <property type="entry name" value="Enolase C-terminal domain-like"/>
    <property type="match status" value="1"/>
</dbReference>
<dbReference type="SUPFAM" id="SSF54826">
    <property type="entry name" value="Enolase N-terminal domain-like"/>
    <property type="match status" value="1"/>
</dbReference>
<dbReference type="PROSITE" id="PS00164">
    <property type="entry name" value="ENOLASE"/>
    <property type="match status" value="1"/>
</dbReference>
<feature type="chain" id="PRO_1000133016" description="Enolase">
    <location>
        <begin position="1"/>
        <end position="428"/>
    </location>
</feature>
<feature type="active site" description="Proton donor" evidence="1">
    <location>
        <position position="204"/>
    </location>
</feature>
<feature type="active site" description="Proton acceptor" evidence="1">
    <location>
        <position position="335"/>
    </location>
</feature>
<feature type="binding site" evidence="1">
    <location>
        <position position="162"/>
    </location>
    <ligand>
        <name>(2R)-2-phosphoglycerate</name>
        <dbReference type="ChEBI" id="CHEBI:58289"/>
    </ligand>
</feature>
<feature type="binding site" evidence="1">
    <location>
        <position position="241"/>
    </location>
    <ligand>
        <name>Mg(2+)</name>
        <dbReference type="ChEBI" id="CHEBI:18420"/>
    </ligand>
</feature>
<feature type="binding site" evidence="1">
    <location>
        <position position="283"/>
    </location>
    <ligand>
        <name>Mg(2+)</name>
        <dbReference type="ChEBI" id="CHEBI:18420"/>
    </ligand>
</feature>
<feature type="binding site" evidence="1">
    <location>
        <position position="310"/>
    </location>
    <ligand>
        <name>Mg(2+)</name>
        <dbReference type="ChEBI" id="CHEBI:18420"/>
    </ligand>
</feature>
<feature type="binding site" evidence="1">
    <location>
        <position position="335"/>
    </location>
    <ligand>
        <name>(2R)-2-phosphoglycerate</name>
        <dbReference type="ChEBI" id="CHEBI:58289"/>
    </ligand>
</feature>
<feature type="binding site" evidence="1">
    <location>
        <position position="364"/>
    </location>
    <ligand>
        <name>(2R)-2-phosphoglycerate</name>
        <dbReference type="ChEBI" id="CHEBI:58289"/>
    </ligand>
</feature>
<feature type="binding site" evidence="1">
    <location>
        <position position="365"/>
    </location>
    <ligand>
        <name>(2R)-2-phosphoglycerate</name>
        <dbReference type="ChEBI" id="CHEBI:58289"/>
    </ligand>
</feature>
<feature type="binding site" evidence="1">
    <location>
        <position position="386"/>
    </location>
    <ligand>
        <name>(2R)-2-phosphoglycerate</name>
        <dbReference type="ChEBI" id="CHEBI:58289"/>
    </ligand>
</feature>
<gene>
    <name evidence="1" type="primary">eno</name>
    <name type="ordered locus">ROP_58410</name>
</gene>
<accession>C1AY93</accession>
<comment type="function">
    <text evidence="1">Catalyzes the reversible conversion of 2-phosphoglycerate (2-PG) into phosphoenolpyruvate (PEP). It is essential for the degradation of carbohydrates via glycolysis.</text>
</comment>
<comment type="catalytic activity">
    <reaction evidence="1">
        <text>(2R)-2-phosphoglycerate = phosphoenolpyruvate + H2O</text>
        <dbReference type="Rhea" id="RHEA:10164"/>
        <dbReference type="ChEBI" id="CHEBI:15377"/>
        <dbReference type="ChEBI" id="CHEBI:58289"/>
        <dbReference type="ChEBI" id="CHEBI:58702"/>
        <dbReference type="EC" id="4.2.1.11"/>
    </reaction>
</comment>
<comment type="cofactor">
    <cofactor evidence="1">
        <name>Mg(2+)</name>
        <dbReference type="ChEBI" id="CHEBI:18420"/>
    </cofactor>
    <text evidence="1">Binds a second Mg(2+) ion via substrate during catalysis.</text>
</comment>
<comment type="pathway">
    <text evidence="1">Carbohydrate degradation; glycolysis; pyruvate from D-glyceraldehyde 3-phosphate: step 4/5.</text>
</comment>
<comment type="subcellular location">
    <subcellularLocation>
        <location evidence="1">Cytoplasm</location>
    </subcellularLocation>
    <subcellularLocation>
        <location evidence="1">Secreted</location>
    </subcellularLocation>
    <subcellularLocation>
        <location evidence="1">Cell surface</location>
    </subcellularLocation>
    <text evidence="1">Fractions of enolase are present in both the cytoplasm and on the cell surface.</text>
</comment>
<comment type="similarity">
    <text evidence="1">Belongs to the enolase family.</text>
</comment>
<evidence type="ECO:0000255" key="1">
    <source>
        <dbReference type="HAMAP-Rule" id="MF_00318"/>
    </source>
</evidence>
<organism>
    <name type="scientific">Rhodococcus opacus (strain B4)</name>
    <dbReference type="NCBI Taxonomy" id="632772"/>
    <lineage>
        <taxon>Bacteria</taxon>
        <taxon>Bacillati</taxon>
        <taxon>Actinomycetota</taxon>
        <taxon>Actinomycetes</taxon>
        <taxon>Mycobacteriales</taxon>
        <taxon>Nocardiaceae</taxon>
        <taxon>Rhodococcus</taxon>
    </lineage>
</organism>
<keyword id="KW-0963">Cytoplasm</keyword>
<keyword id="KW-0324">Glycolysis</keyword>
<keyword id="KW-0456">Lyase</keyword>
<keyword id="KW-0460">Magnesium</keyword>
<keyword id="KW-0479">Metal-binding</keyword>
<keyword id="KW-0964">Secreted</keyword>
<sequence length="428" mass="44961">MSIIEQVGAREILDSRGNPTVEVEVLLDDGSFARAAVPSGASTGEHEAVELRDGGDRYNGKGVEKAVEAVLSEIAPAIIGIDATEQRTVDQALLDADGTPDKSRLGANALLGASLAVARAAAESSGLDLFRYVGGPNAHVLPVPMMNILNGGAHADTGVDVQEFMVAPIGAATFKESLRWGAEVYHALKSVLKEKGLATGLGDEGGFAPDVAGTKEALDLISLAVGKTGLVLGTDVALALDVAATEFYTDGTGYKFEGSNRTADEMAAFYAELVDAYPIVSIEDPLDEDDWDGWVALTDQIGNKVQLVGDDLFVTNPERLEEGIVKGAANALLVKVNQIGTLTETLDAVDLAHRNGYKTMMSHRSGETEDTTIADLAVAVGSGQIKTGAPARSERVAKYNQLLRIEENLGDAARYAGEVAFPRFAFEG</sequence>
<protein>
    <recommendedName>
        <fullName evidence="1">Enolase</fullName>
        <ecNumber evidence="1">4.2.1.11</ecNumber>
    </recommendedName>
    <alternativeName>
        <fullName evidence="1">2-phospho-D-glycerate hydro-lyase</fullName>
    </alternativeName>
    <alternativeName>
        <fullName evidence="1">2-phosphoglycerate dehydratase</fullName>
    </alternativeName>
</protein>
<reference key="1">
    <citation type="submission" date="2009-03" db="EMBL/GenBank/DDBJ databases">
        <title>Comparison of the complete genome sequences of Rhodococcus erythropolis PR4 and Rhodococcus opacus B4.</title>
        <authorList>
            <person name="Takarada H."/>
            <person name="Sekine M."/>
            <person name="Hosoyama A."/>
            <person name="Yamada R."/>
            <person name="Fujisawa T."/>
            <person name="Omata S."/>
            <person name="Shimizu A."/>
            <person name="Tsukatani N."/>
            <person name="Tanikawa S."/>
            <person name="Fujita N."/>
            <person name="Harayama S."/>
        </authorList>
    </citation>
    <scope>NUCLEOTIDE SEQUENCE [LARGE SCALE GENOMIC DNA]</scope>
    <source>
        <strain>B4</strain>
    </source>
</reference>
<name>ENO_RHOOB</name>